<protein>
    <recommendedName>
        <fullName evidence="5">Depolymerase, capsule KN4-specific</fullName>
    </recommendedName>
    <alternativeName>
        <fullName evidence="4">KN4dep</fullName>
    </alternativeName>
    <alternativeName>
        <fullName evidence="5">Probable tail spike protein</fullName>
    </alternativeName>
</protein>
<proteinExistence type="inferred from homology"/>
<reference key="1">
    <citation type="journal article" date="2019" name="Microb. Biotechnol.">
        <title>Identification of three podoviruses infecting Klebsiella encoding capsule depolymerases that digest specific capsular types.</title>
        <authorList>
            <person name="Pan Y.J."/>
            <person name="Lin T.L."/>
            <person name="Chen Y.Y."/>
            <person name="Lai P.H."/>
            <person name="Tsai Y.T."/>
            <person name="Hsu C.R."/>
            <person name="Hsieh P.F."/>
            <person name="Lin Y.T."/>
            <person name="Wang J.T."/>
        </authorList>
    </citation>
    <scope>NUCLEOTIDE SEQUENCE [LARGE SCALE GENOMIC DNA]</scope>
    <scope>FUNCTION</scope>
</reference>
<reference key="2">
    <citation type="journal article" date="2019" name="Front. Microbiol.">
        <title>Modeling the Architecture of Depolymerase-Containing Receptor Binding Proteins in Klebsiella Phages.</title>
        <authorList>
            <person name="Latka A."/>
            <person name="Leiman P.G."/>
            <person name="Drulis-Kawa Z."/>
            <person name="Briers Y."/>
        </authorList>
    </citation>
    <scope>REVIEW</scope>
</reference>
<dbReference type="EMBL" id="LC413195">
    <property type="protein sequence ID" value="BBF66888.1"/>
    <property type="molecule type" value="Genomic_DNA"/>
</dbReference>
<dbReference type="RefSeq" id="YP_009818003.1">
    <property type="nucleotide sequence ID" value="NC_048130.1"/>
</dbReference>
<dbReference type="SMR" id="A0A3T0ZBZ8"/>
<dbReference type="GeneID" id="55009336"/>
<dbReference type="Proteomes" id="UP000278548">
    <property type="component" value="Segment"/>
</dbReference>
<dbReference type="GO" id="GO:0098015">
    <property type="term" value="C:virus tail"/>
    <property type="evidence" value="ECO:0007669"/>
    <property type="project" value="UniProtKB-KW"/>
</dbReference>
<dbReference type="GO" id="GO:0098671">
    <property type="term" value="P:adhesion receptor-mediated virion attachment to host cell"/>
    <property type="evidence" value="ECO:0007669"/>
    <property type="project" value="UniProtKB-KW"/>
</dbReference>
<dbReference type="GO" id="GO:0098994">
    <property type="term" value="P:symbiont entry into host cell via disruption of host cell envelope"/>
    <property type="evidence" value="ECO:0007669"/>
    <property type="project" value="UniProtKB-KW"/>
</dbReference>
<dbReference type="GO" id="GO:0098996">
    <property type="term" value="P:symbiont entry into host cell via disruption of host cell glycocalyx"/>
    <property type="evidence" value="ECO:0007669"/>
    <property type="project" value="UniProtKB-KW"/>
</dbReference>
<dbReference type="InterPro" id="IPR005604">
    <property type="entry name" value="Phage_T7_tail_fibre-like_N"/>
</dbReference>
<dbReference type="Pfam" id="PF03906">
    <property type="entry name" value="Phage_T7_tail"/>
    <property type="match status" value="1"/>
</dbReference>
<accession>A0A3T0ZBZ8</accession>
<sequence length="850" mass="89498">MDQDIKTIIQYPVGATEFDIPFDYLSRKFVRVSLVSDDNRRLLSNITEYRYVSKTRVKLLVATGGFDRVEIRRFTSASERIVDFSDGSVLRAADLNVSQLQSAHIAEEARDVSLMSMLQDDAGNLDAKGRRIVNLSDPVADSDAATKGYVDEGLEHTLRFSESTVQPLPPLSLMDGKILAFSGGKPIGILPESGSAADVLVELSKVSGYNLIGKATSFANMRSASGLKVGDVVLLTSYYEGGTTGGGEFLVKAGSAVDDGGHICVPSGSTNIYLERITSEVHLLDYGILTELNGTGARIDMSGKLQSAINRAKSAVMPLVTGIPSENHYIRRGVYIEKGVDITGIKTITGCLSLLVDTRKLVGLVAPGYPDTKWALVNLNAQFNASGIVFGSTIGNQSFDSIVVRDVSDRGAPGAGQLHVTSGTMVKGALCATGFDGPGVSILGSYDSVIPDIRSVHCGNVAQWGVDIAAYRGSRPDNTNCMTIGRIECHDATDRALRCAADLSHVGEIHIEATLVTSTEQSTSATIADNGWGYANVLLQGLGTSYGSVRDLPVTGSVPPVVEVVADDTVVDSLSLPRSNLSLHYAFTTPRGCLSAGTINVGGDIIVTNGANTNIDSITMGGDSAKLTSASINLNVGILRAVGAASSVVSVGGNIGRLECASATLTGVDVLRGSITSLTLLDRNTISRTTAQSLNVVGTRNYLKSGFRVSGPATLGGVNNSASDTVFAGAVALKDPWKFIAVYINGNVTYSGNTTSSTYDVSFQDVFIEGELLLSGPCRIHADNMRAINMRIGQMQTGFIVMKNCTLSGGVEGNYIGSFNVPPIGSITQNFETGIPSVFTTSGWKPLTLA</sequence>
<organismHost>
    <name type="scientific">Klebsiella pneumoniae</name>
    <dbReference type="NCBI Taxonomy" id="573"/>
</organismHost>
<name>DEPOL_BPK41</name>
<feature type="chain" id="PRO_0000458721" description="Depolymerase, capsule KN4-specific">
    <location>
        <begin position="1"/>
        <end position="850"/>
    </location>
</feature>
<organism>
    <name type="scientific">Klebsiella phage KN4-1</name>
    <name type="common">Bacteriophage KN4-1</name>
    <dbReference type="NCBI Taxonomy" id="2282631"/>
    <lineage>
        <taxon>Viruses</taxon>
        <taxon>Duplodnaviria</taxon>
        <taxon>Heunggongvirae</taxon>
        <taxon>Uroviricota</taxon>
        <taxon>Caudoviricetes</taxon>
        <taxon>Autographiviridae</taxon>
        <taxon>Studiervirinae</taxon>
        <taxon>Przondovirus</taxon>
        <taxon>Przondovirus KN41</taxon>
    </lineage>
</organism>
<evidence type="ECO:0000250" key="1">
    <source>
        <dbReference type="UniProtKB" id="D1L2X0"/>
    </source>
</evidence>
<evidence type="ECO:0000250" key="2">
    <source>
        <dbReference type="UniProtKB" id="P03748"/>
    </source>
</evidence>
<evidence type="ECO:0000269" key="3">
    <source>
    </source>
</evidence>
<evidence type="ECO:0000303" key="4">
    <source>
    </source>
</evidence>
<evidence type="ECO:0000305" key="5"/>
<evidence type="ECO:0000305" key="6">
    <source>
    </source>
</evidence>
<comment type="function">
    <text evidence="3 6">Functions as a receptor binding protein (RBP) and probably mediates the attachment to the host capsular exopolysaccharides (Probable). Displays a depolymerase activity that specifically degrades the KN4-type polysaccharides of Klebsiella pneumoniae capsule, which allows the phage to reach the host cell membrane and bind the entry receptor (PubMed:30706654).</text>
</comment>
<comment type="subunit">
    <text evidence="2">Homotrimer.</text>
</comment>
<comment type="subcellular location">
    <subcellularLocation>
        <location evidence="5">Virion</location>
    </subcellularLocation>
    <text evidence="5">Tail appendage.</text>
</comment>
<comment type="domain">
    <text evidence="1 5">The N-terminus anchors the RBP to the virion (By similarity). The central part and C-terminus probably binds and degrades the host exopolysaccharides (Probable).</text>
</comment>
<comment type="similarity">
    <text evidence="5">In the N-terminal section; belongs to the Teseptimavirus fiber family.</text>
</comment>
<keyword id="KW-1238">Degradation of host capsule during virus entry</keyword>
<keyword id="KW-1235">Degradation of host cell envelope components during virus entry</keyword>
<keyword id="KW-0945">Host-virus interaction</keyword>
<keyword id="KW-1185">Reference proteome</keyword>
<keyword id="KW-1233">Viral attachment to host adhesion receptor</keyword>
<keyword id="KW-1161">Viral attachment to host cell</keyword>
<keyword id="KW-1227">Viral tail protein</keyword>
<keyword id="KW-0946">Virion</keyword>
<keyword id="KW-1160">Virus entry into host cell</keyword>